<feature type="chain" id="PRO_0000113328" description="Malate dehydrogenase">
    <location>
        <begin position="1"/>
        <end position="311"/>
    </location>
</feature>
<feature type="active site" description="Proton acceptor" evidence="1">
    <location>
        <position position="177"/>
    </location>
</feature>
<feature type="binding site" evidence="1">
    <location>
        <begin position="7"/>
        <end position="13"/>
    </location>
    <ligand>
        <name>NAD(+)</name>
        <dbReference type="ChEBI" id="CHEBI:57540"/>
    </ligand>
</feature>
<feature type="binding site" evidence="1">
    <location>
        <position position="34"/>
    </location>
    <ligand>
        <name>NAD(+)</name>
        <dbReference type="ChEBI" id="CHEBI:57540"/>
    </ligand>
</feature>
<feature type="binding site" evidence="1">
    <location>
        <position position="81"/>
    </location>
    <ligand>
        <name>substrate</name>
    </ligand>
</feature>
<feature type="binding site" evidence="1">
    <location>
        <position position="87"/>
    </location>
    <ligand>
        <name>substrate</name>
    </ligand>
</feature>
<feature type="binding site" evidence="1">
    <location>
        <position position="94"/>
    </location>
    <ligand>
        <name>NAD(+)</name>
        <dbReference type="ChEBI" id="CHEBI:57540"/>
    </ligand>
</feature>
<feature type="binding site" evidence="1">
    <location>
        <begin position="117"/>
        <end position="119"/>
    </location>
    <ligand>
        <name>NAD(+)</name>
        <dbReference type="ChEBI" id="CHEBI:57540"/>
    </ligand>
</feature>
<feature type="binding site" evidence="1">
    <location>
        <position position="119"/>
    </location>
    <ligand>
        <name>substrate</name>
    </ligand>
</feature>
<feature type="binding site" evidence="1">
    <location>
        <position position="153"/>
    </location>
    <ligand>
        <name>substrate</name>
    </ligand>
</feature>
<feature type="binding site" evidence="1">
    <location>
        <position position="227"/>
    </location>
    <ligand>
        <name>NAD(+)</name>
        <dbReference type="ChEBI" id="CHEBI:57540"/>
    </ligand>
</feature>
<feature type="sequence variant" description="In strain: M551.">
    <original>P</original>
    <variation>T</variation>
    <location>
        <position position="63"/>
    </location>
</feature>
<feature type="sequence variant" description="In strain: M553, M535, CO391, CO407 and 653/36.">
    <original>V</original>
    <variation>L</variation>
    <location>
        <position position="171"/>
    </location>
</feature>
<feature type="sequence variant" description="In strain: M548.">
    <original>K</original>
    <variation>N</variation>
    <location>
        <position position="204"/>
    </location>
</feature>
<feature type="sequence variant" description="In strain: 569B.">
    <original>A</original>
    <variation>T</variation>
    <location>
        <position position="223"/>
    </location>
</feature>
<feature type="sequence variant" description="In strain: M550, M551, M554, M557, M558 and GD98200.">
    <original>A</original>
    <variation>E</variation>
    <location>
        <position position="277"/>
    </location>
</feature>
<reference key="1">
    <citation type="journal article" date="1999" name="Infect. Immun.">
        <title>Evolutionary relationships of pathogenic clones of Vibrio cholerae by sequence analysis of four housekeeping genes.</title>
        <authorList>
            <person name="Byun R."/>
            <person name="Elbourne L.D."/>
            <person name="Lan R."/>
            <person name="Reeves P.R."/>
        </authorList>
    </citation>
    <scope>NUCLEOTIDE SEQUENCE [GENOMIC DNA]</scope>
    <source>
        <strain>M535</strain>
        <strain>M536</strain>
        <strain>M548</strain>
        <strain>M549</strain>
        <strain>M550</strain>
        <strain>M551</strain>
        <strain>M553</strain>
        <strain>M554</strain>
        <strain>M555</strain>
        <strain>M556</strain>
        <strain>M557</strain>
        <strain>M558</strain>
        <strain>M559</strain>
        <strain>M560</strain>
        <strain>M561</strain>
        <strain>M562</strain>
        <strain>M563</strain>
        <strain>M645</strain>
        <strain>M793</strain>
    </source>
</reference>
<reference key="2">
    <citation type="journal article" date="2000" name="Nature">
        <title>DNA sequence of both chromosomes of the cholera pathogen Vibrio cholerae.</title>
        <authorList>
            <person name="Heidelberg J.F."/>
            <person name="Eisen J.A."/>
            <person name="Nelson W.C."/>
            <person name="Clayton R.A."/>
            <person name="Gwinn M.L."/>
            <person name="Dodson R.J."/>
            <person name="Haft D.H."/>
            <person name="Hickey E.K."/>
            <person name="Peterson J.D."/>
            <person name="Umayam L.A."/>
            <person name="Gill S.R."/>
            <person name="Nelson K.E."/>
            <person name="Read T.D."/>
            <person name="Tettelin H."/>
            <person name="Richardson D.L."/>
            <person name="Ermolaeva M.D."/>
            <person name="Vamathevan J.J."/>
            <person name="Bass S."/>
            <person name="Qin H."/>
            <person name="Dragoi I."/>
            <person name="Sellers P."/>
            <person name="McDonald L.A."/>
            <person name="Utterback T.R."/>
            <person name="Fleischmann R.D."/>
            <person name="Nierman W.C."/>
            <person name="White O."/>
            <person name="Salzberg S.L."/>
            <person name="Smith H.O."/>
            <person name="Colwell R.R."/>
            <person name="Mekalanos J.J."/>
            <person name="Venter J.C."/>
            <person name="Fraser C.M."/>
        </authorList>
    </citation>
    <scope>NUCLEOTIDE SEQUENCE [LARGE SCALE GENOMIC DNA]</scope>
    <source>
        <strain>ATCC 39315 / El Tor Inaba N16961</strain>
    </source>
</reference>
<reference key="3">
    <citation type="journal article" date="2000" name="J. Bacteriol.">
        <title>Molecular analyses of a putative CTXphi precursor and evidence for independent acquisition of distinct CTXphis by toxigenic Vibrio cholerae.</title>
        <authorList>
            <person name="Boyd E.F."/>
            <person name="Heilpern A.J."/>
            <person name="Waldor M.K."/>
        </authorList>
    </citation>
    <scope>NUCLEOTIDE SEQUENCE [GENOMIC DNA] OF 26-248</scope>
    <source>
        <strain>151 / Serotype O37</strain>
        <strain>208 / Serotype O11</strain>
        <strain>ATCC 25870 / Classical Inaba 569B / Serotype O1</strain>
        <strain>CO130 / Serotype O37</strain>
        <strain>V46 / Serotype O141</strain>
        <strain>V52 / Serotype O37</strain>
    </source>
</reference>
<reference key="4">
    <citation type="journal article" date="2002" name="J. Bacteriol.">
        <title>Allelic diversity and population structure in Vibrio cholerae O139 Bengal based on nucleotide sequence analysis.</title>
        <authorList>
            <person name="Farfan M."/>
            <person name="Minana-Galbis D."/>
            <person name="Fuste M.C."/>
            <person name="Loren J.G."/>
        </authorList>
    </citation>
    <scope>NUCLEOTIDE SEQUENCE [GENOMIC DNA] OF 38-201</scope>
    <source>
        <strain>25872</strain>
        <strain>329 / Serotype O139</strain>
        <strain>653/36 / Serotype O139</strain>
        <strain>BO1 / Serotype O139</strain>
        <strain>BO2 / Serotype O139</strain>
        <strain>BO4 / Serotype O139</strain>
        <strain>CO391 / Serotype O139</strain>
        <strain>CO396 / Serotype O139</strain>
        <strain>CO402 / Serotype O139</strain>
        <strain>CO403 / Serotype O139</strain>
        <strain>CO404 / Serotype O139</strain>
        <strain>CO406 / Serotype O139</strain>
        <strain>CO407 / Serotype O139</strain>
        <strain>CO414 / Serotype O139</strain>
        <strain>CO415 / Serotype O139</strain>
        <strain>CO418 / Serotype O139</strain>
        <strain>CO487 / Serotype O1</strain>
        <strain>MDO90 / Serotype O139</strain>
        <strain>MOD084 / Serotype O139</strain>
        <strain>NPO388 / Serotype O139</strain>
        <strain>NPO390 / Serotype O139</strain>
        <strain>NT329 / Serotype O139</strain>
        <strain>NT330 / Serotype O139</strain>
        <strain>NT638 / Serotype O139</strain>
        <strain>NT642 / Serotype O139</strain>
        <strain>NT648 / Serotype O139</strain>
        <strain>SG24 / Serotype O139</strain>
        <strain>SO19 / Serotype O139</strain>
        <strain>SO29 / Serotype O139</strain>
        <strain>SO30 / Serotype O139</strain>
        <strain>VO6 / Serotype O139</strain>
    </source>
</reference>
<reference key="5">
    <citation type="submission" date="2002-08" db="EMBL/GenBank/DDBJ databases">
        <title>Housekeeping genes of strains of Vibrio cholerae isolated from Guangdong province.</title>
        <authorList>
            <person name="Yongyu R."/>
            <person name="Biao K."/>
            <person name="Shouyi G."/>
        </authorList>
    </citation>
    <scope>NUCLEOTIDE SEQUENCE [GENOMIC DNA] OF 111-310</scope>
    <source>
        <strain>GD64313 / Serotype O1</strain>
        <strain>GD9512 / Serotype O139</strain>
        <strain>GD98200 / Serotype O139</strain>
        <strain>GD98224 / Serotype O1</strain>
    </source>
</reference>
<proteinExistence type="inferred from homology"/>
<dbReference type="EC" id="1.1.1.37"/>
<dbReference type="EMBL" id="AF117859">
    <property type="protein sequence ID" value="AAD23488.1"/>
    <property type="molecule type" value="Genomic_DNA"/>
</dbReference>
<dbReference type="EMBL" id="AF117860">
    <property type="protein sequence ID" value="AAD23489.1"/>
    <property type="molecule type" value="Genomic_DNA"/>
</dbReference>
<dbReference type="EMBL" id="AF117861">
    <property type="protein sequence ID" value="AAD23490.1"/>
    <property type="molecule type" value="Genomic_DNA"/>
</dbReference>
<dbReference type="EMBL" id="AF117862">
    <property type="protein sequence ID" value="AAD23491.1"/>
    <property type="molecule type" value="Genomic_DNA"/>
</dbReference>
<dbReference type="EMBL" id="AF117863">
    <property type="protein sequence ID" value="AAD23492.1"/>
    <property type="molecule type" value="Genomic_DNA"/>
</dbReference>
<dbReference type="EMBL" id="AF117864">
    <property type="protein sequence ID" value="AAD23493.1"/>
    <property type="molecule type" value="Genomic_DNA"/>
</dbReference>
<dbReference type="EMBL" id="AF117865">
    <property type="protein sequence ID" value="AAD23494.1"/>
    <property type="molecule type" value="Genomic_DNA"/>
</dbReference>
<dbReference type="EMBL" id="AF117866">
    <property type="protein sequence ID" value="AAD23495.1"/>
    <property type="molecule type" value="Genomic_DNA"/>
</dbReference>
<dbReference type="EMBL" id="AF117867">
    <property type="protein sequence ID" value="AAD23496.1"/>
    <property type="molecule type" value="Genomic_DNA"/>
</dbReference>
<dbReference type="EMBL" id="AF117868">
    <property type="protein sequence ID" value="AAD23497.1"/>
    <property type="molecule type" value="Genomic_DNA"/>
</dbReference>
<dbReference type="EMBL" id="AF117869">
    <property type="protein sequence ID" value="AAD23498.1"/>
    <property type="molecule type" value="Genomic_DNA"/>
</dbReference>
<dbReference type="EMBL" id="AF117870">
    <property type="protein sequence ID" value="AAD23499.1"/>
    <property type="molecule type" value="Genomic_DNA"/>
</dbReference>
<dbReference type="EMBL" id="AF117871">
    <property type="protein sequence ID" value="AAD23500.1"/>
    <property type="molecule type" value="Genomic_DNA"/>
</dbReference>
<dbReference type="EMBL" id="AF117872">
    <property type="protein sequence ID" value="AAD23501.1"/>
    <property type="molecule type" value="Genomic_DNA"/>
</dbReference>
<dbReference type="EMBL" id="AF117873">
    <property type="protein sequence ID" value="AAD23502.1"/>
    <property type="molecule type" value="Genomic_DNA"/>
</dbReference>
<dbReference type="EMBL" id="AF117874">
    <property type="protein sequence ID" value="AAD23503.1"/>
    <property type="molecule type" value="Genomic_DNA"/>
</dbReference>
<dbReference type="EMBL" id="AF117875">
    <property type="protein sequence ID" value="AAD23504.1"/>
    <property type="molecule type" value="Genomic_DNA"/>
</dbReference>
<dbReference type="EMBL" id="AF117876">
    <property type="protein sequence ID" value="AAD23505.1"/>
    <property type="molecule type" value="Genomic_DNA"/>
</dbReference>
<dbReference type="EMBL" id="AF117877">
    <property type="protein sequence ID" value="AAD23506.1"/>
    <property type="molecule type" value="Genomic_DNA"/>
</dbReference>
<dbReference type="EMBL" id="AE003852">
    <property type="protein sequence ID" value="AAF93605.1"/>
    <property type="status" value="ALT_INIT"/>
    <property type="molecule type" value="Genomic_DNA"/>
</dbReference>
<dbReference type="EMBL" id="AF238329">
    <property type="protein sequence ID" value="AAK15054.1"/>
    <property type="molecule type" value="Genomic_DNA"/>
</dbReference>
<dbReference type="EMBL" id="AF238330">
    <property type="protein sequence ID" value="AAK15055.1"/>
    <property type="molecule type" value="Genomic_DNA"/>
</dbReference>
<dbReference type="EMBL" id="AF238331">
    <property type="protein sequence ID" value="AAK15056.1"/>
    <property type="molecule type" value="Genomic_DNA"/>
</dbReference>
<dbReference type="EMBL" id="AF238332">
    <property type="protein sequence ID" value="AAK15057.1"/>
    <property type="molecule type" value="Genomic_DNA"/>
</dbReference>
<dbReference type="EMBL" id="AF238333">
    <property type="protein sequence ID" value="AAK15058.1"/>
    <property type="molecule type" value="Genomic_DNA"/>
</dbReference>
<dbReference type="EMBL" id="AF238334">
    <property type="protein sequence ID" value="AAK15059.1"/>
    <property type="molecule type" value="Genomic_DNA"/>
</dbReference>
<dbReference type="EMBL" id="AF343280">
    <property type="protein sequence ID" value="AAK30532.1"/>
    <property type="molecule type" value="Genomic_DNA"/>
</dbReference>
<dbReference type="EMBL" id="AF343281">
    <property type="protein sequence ID" value="AAK30533.1"/>
    <property type="molecule type" value="Genomic_DNA"/>
</dbReference>
<dbReference type="EMBL" id="AF343282">
    <property type="protein sequence ID" value="AAK30534.1"/>
    <property type="molecule type" value="Genomic_DNA"/>
</dbReference>
<dbReference type="EMBL" id="AF343283">
    <property type="protein sequence ID" value="AAK30535.1"/>
    <property type="molecule type" value="Genomic_DNA"/>
</dbReference>
<dbReference type="EMBL" id="AF343284">
    <property type="protein sequence ID" value="AAK30536.1"/>
    <property type="molecule type" value="Genomic_DNA"/>
</dbReference>
<dbReference type="EMBL" id="AF343285">
    <property type="protein sequence ID" value="AAK30537.1"/>
    <property type="molecule type" value="Genomic_DNA"/>
</dbReference>
<dbReference type="EMBL" id="AF343286">
    <property type="protein sequence ID" value="AAK30538.1"/>
    <property type="molecule type" value="Genomic_DNA"/>
</dbReference>
<dbReference type="EMBL" id="AF343287">
    <property type="protein sequence ID" value="AAK30539.1"/>
    <property type="molecule type" value="Genomic_DNA"/>
</dbReference>
<dbReference type="EMBL" id="AF343288">
    <property type="protein sequence ID" value="AAK30540.1"/>
    <property type="molecule type" value="Genomic_DNA"/>
</dbReference>
<dbReference type="EMBL" id="AF343289">
    <property type="protein sequence ID" value="AAK30541.1"/>
    <property type="molecule type" value="Genomic_DNA"/>
</dbReference>
<dbReference type="EMBL" id="AF343290">
    <property type="protein sequence ID" value="AAK30542.1"/>
    <property type="molecule type" value="Genomic_DNA"/>
</dbReference>
<dbReference type="EMBL" id="AF343291">
    <property type="protein sequence ID" value="AAK30543.1"/>
    <property type="molecule type" value="Genomic_DNA"/>
</dbReference>
<dbReference type="EMBL" id="AF343292">
    <property type="protein sequence ID" value="AAK30544.1"/>
    <property type="molecule type" value="Genomic_DNA"/>
</dbReference>
<dbReference type="EMBL" id="AF343293">
    <property type="protein sequence ID" value="AAK30545.1"/>
    <property type="molecule type" value="Genomic_DNA"/>
</dbReference>
<dbReference type="EMBL" id="AF343294">
    <property type="protein sequence ID" value="AAK30546.1"/>
    <property type="molecule type" value="Genomic_DNA"/>
</dbReference>
<dbReference type="EMBL" id="AF343295">
    <property type="protein sequence ID" value="AAK30547.1"/>
    <property type="molecule type" value="Genomic_DNA"/>
</dbReference>
<dbReference type="EMBL" id="AF343296">
    <property type="protein sequence ID" value="AAK30548.1"/>
    <property type="molecule type" value="Genomic_DNA"/>
</dbReference>
<dbReference type="EMBL" id="AF343297">
    <property type="protein sequence ID" value="AAK30549.1"/>
    <property type="molecule type" value="Genomic_DNA"/>
</dbReference>
<dbReference type="EMBL" id="AF343298">
    <property type="protein sequence ID" value="AAK30550.1"/>
    <property type="molecule type" value="Genomic_DNA"/>
</dbReference>
<dbReference type="EMBL" id="AF343299">
    <property type="protein sequence ID" value="AAK30551.1"/>
    <property type="molecule type" value="Genomic_DNA"/>
</dbReference>
<dbReference type="EMBL" id="AF343300">
    <property type="protein sequence ID" value="AAK30552.1"/>
    <property type="molecule type" value="Genomic_DNA"/>
</dbReference>
<dbReference type="EMBL" id="AF343301">
    <property type="protein sequence ID" value="AAK30553.1"/>
    <property type="molecule type" value="Genomic_DNA"/>
</dbReference>
<dbReference type="EMBL" id="AF343302">
    <property type="protein sequence ID" value="AAK30554.1"/>
    <property type="molecule type" value="Genomic_DNA"/>
</dbReference>
<dbReference type="EMBL" id="AF343303">
    <property type="protein sequence ID" value="AAK30555.1"/>
    <property type="molecule type" value="Genomic_DNA"/>
</dbReference>
<dbReference type="EMBL" id="AF343304">
    <property type="protein sequence ID" value="AAK30556.1"/>
    <property type="molecule type" value="Genomic_DNA"/>
</dbReference>
<dbReference type="EMBL" id="AF343305">
    <property type="protein sequence ID" value="AAK30557.1"/>
    <property type="molecule type" value="Genomic_DNA"/>
</dbReference>
<dbReference type="EMBL" id="AF343306">
    <property type="protein sequence ID" value="AAK30558.1"/>
    <property type="molecule type" value="Genomic_DNA"/>
</dbReference>
<dbReference type="EMBL" id="AF343307">
    <property type="protein sequence ID" value="AAK30559.1"/>
    <property type="molecule type" value="Genomic_DNA"/>
</dbReference>
<dbReference type="EMBL" id="AF343308">
    <property type="protein sequence ID" value="AAK30560.1"/>
    <property type="molecule type" value="Genomic_DNA"/>
</dbReference>
<dbReference type="EMBL" id="AF343309">
    <property type="protein sequence ID" value="AAK30561.1"/>
    <property type="molecule type" value="Genomic_DNA"/>
</dbReference>
<dbReference type="EMBL" id="AF343310">
    <property type="protein sequence ID" value="AAK30562.1"/>
    <property type="molecule type" value="Genomic_DNA"/>
</dbReference>
<dbReference type="EMBL" id="AF540657">
    <property type="protein sequence ID" value="AAN23136.1"/>
    <property type="molecule type" value="Genomic_DNA"/>
</dbReference>
<dbReference type="EMBL" id="AF540658">
    <property type="protein sequence ID" value="AAN23137.1"/>
    <property type="molecule type" value="Genomic_DNA"/>
</dbReference>
<dbReference type="EMBL" id="AF540659">
    <property type="protein sequence ID" value="AAN23138.1"/>
    <property type="molecule type" value="Genomic_DNA"/>
</dbReference>
<dbReference type="EMBL" id="AF540660">
    <property type="protein sequence ID" value="AAN23139.1"/>
    <property type="molecule type" value="Genomic_DNA"/>
</dbReference>
<dbReference type="PIR" id="G82324">
    <property type="entry name" value="G82324"/>
</dbReference>
<dbReference type="RefSeq" id="NP_230086.2">
    <property type="nucleotide sequence ID" value="NC_002505.1"/>
</dbReference>
<dbReference type="RefSeq" id="WP_000861563.1">
    <property type="nucleotide sequence ID" value="NZ_LT906614.1"/>
</dbReference>
<dbReference type="SMR" id="Q9KUT3"/>
<dbReference type="STRING" id="243277.VC_0432"/>
<dbReference type="DNASU" id="2615693"/>
<dbReference type="EnsemblBacteria" id="AAF93605">
    <property type="protein sequence ID" value="AAF93605"/>
    <property type="gene ID" value="VC_0432"/>
</dbReference>
<dbReference type="GeneID" id="69720808"/>
<dbReference type="KEGG" id="vch:VC_0432"/>
<dbReference type="PATRIC" id="fig|243277.26.peg.406"/>
<dbReference type="eggNOG" id="COG0039">
    <property type="taxonomic scope" value="Bacteria"/>
</dbReference>
<dbReference type="HOGENOM" id="CLU_047181_1_0_6"/>
<dbReference type="Proteomes" id="UP000000584">
    <property type="component" value="Chromosome 1"/>
</dbReference>
<dbReference type="GO" id="GO:0005737">
    <property type="term" value="C:cytoplasm"/>
    <property type="evidence" value="ECO:0000318"/>
    <property type="project" value="GO_Central"/>
</dbReference>
<dbReference type="GO" id="GO:0030060">
    <property type="term" value="F:L-malate dehydrogenase (NAD+) activity"/>
    <property type="evidence" value="ECO:0000318"/>
    <property type="project" value="GO_Central"/>
</dbReference>
<dbReference type="GO" id="GO:0006108">
    <property type="term" value="P:malate metabolic process"/>
    <property type="evidence" value="ECO:0007669"/>
    <property type="project" value="InterPro"/>
</dbReference>
<dbReference type="GO" id="GO:0006099">
    <property type="term" value="P:tricarboxylic acid cycle"/>
    <property type="evidence" value="ECO:0007669"/>
    <property type="project" value="UniProtKB-UniRule"/>
</dbReference>
<dbReference type="CDD" id="cd01337">
    <property type="entry name" value="MDH_glyoxysomal_mitochondrial"/>
    <property type="match status" value="1"/>
</dbReference>
<dbReference type="FunFam" id="3.40.50.720:FF:000017">
    <property type="entry name" value="Malate dehydrogenase"/>
    <property type="match status" value="1"/>
</dbReference>
<dbReference type="FunFam" id="3.90.110.10:FF:000001">
    <property type="entry name" value="Malate dehydrogenase"/>
    <property type="match status" value="1"/>
</dbReference>
<dbReference type="Gene3D" id="3.90.110.10">
    <property type="entry name" value="Lactate dehydrogenase/glycoside hydrolase, family 4, C-terminal"/>
    <property type="match status" value="1"/>
</dbReference>
<dbReference type="Gene3D" id="3.40.50.720">
    <property type="entry name" value="NAD(P)-binding Rossmann-like Domain"/>
    <property type="match status" value="1"/>
</dbReference>
<dbReference type="HAMAP" id="MF_01516">
    <property type="entry name" value="Malate_dehydrog_1"/>
    <property type="match status" value="1"/>
</dbReference>
<dbReference type="InterPro" id="IPR001557">
    <property type="entry name" value="L-lactate/malate_DH"/>
</dbReference>
<dbReference type="InterPro" id="IPR022383">
    <property type="entry name" value="Lactate/malate_DH_C"/>
</dbReference>
<dbReference type="InterPro" id="IPR001236">
    <property type="entry name" value="Lactate/malate_DH_N"/>
</dbReference>
<dbReference type="InterPro" id="IPR015955">
    <property type="entry name" value="Lactate_DH/Glyco_Ohase_4_C"/>
</dbReference>
<dbReference type="InterPro" id="IPR001252">
    <property type="entry name" value="Malate_DH_AS"/>
</dbReference>
<dbReference type="InterPro" id="IPR010097">
    <property type="entry name" value="Malate_DH_type1"/>
</dbReference>
<dbReference type="InterPro" id="IPR023958">
    <property type="entry name" value="Malate_DH_type1_bac"/>
</dbReference>
<dbReference type="InterPro" id="IPR036291">
    <property type="entry name" value="NAD(P)-bd_dom_sf"/>
</dbReference>
<dbReference type="NCBIfam" id="TIGR01772">
    <property type="entry name" value="MDH_euk_gproteo"/>
    <property type="match status" value="1"/>
</dbReference>
<dbReference type="PANTHER" id="PTHR11540">
    <property type="entry name" value="MALATE AND LACTATE DEHYDROGENASE"/>
    <property type="match status" value="1"/>
</dbReference>
<dbReference type="PANTHER" id="PTHR11540:SF16">
    <property type="entry name" value="MALATE DEHYDROGENASE, MITOCHONDRIAL"/>
    <property type="match status" value="1"/>
</dbReference>
<dbReference type="Pfam" id="PF02866">
    <property type="entry name" value="Ldh_1_C"/>
    <property type="match status" value="1"/>
</dbReference>
<dbReference type="Pfam" id="PF00056">
    <property type="entry name" value="Ldh_1_N"/>
    <property type="match status" value="1"/>
</dbReference>
<dbReference type="PIRSF" id="PIRSF000102">
    <property type="entry name" value="Lac_mal_DH"/>
    <property type="match status" value="1"/>
</dbReference>
<dbReference type="SUPFAM" id="SSF56327">
    <property type="entry name" value="LDH C-terminal domain-like"/>
    <property type="match status" value="1"/>
</dbReference>
<dbReference type="SUPFAM" id="SSF51735">
    <property type="entry name" value="NAD(P)-binding Rossmann-fold domains"/>
    <property type="match status" value="1"/>
</dbReference>
<dbReference type="PROSITE" id="PS00068">
    <property type="entry name" value="MDH"/>
    <property type="match status" value="1"/>
</dbReference>
<gene>
    <name type="primary">mdh</name>
    <name type="ordered locus">VC_0432</name>
</gene>
<sequence>MKVAVIGAAGGIGQALALLLKNRLPAGSDLALYDIAPVTPGVAADLSHIPTPVTIKGYAGEDPTPALEGADVVLVSAGVARKPGMDRADLFNVNAGIVKALAEKIAVVCPKACVGIITNPVNTTVPIAAEVLKKAGVYDKRKLFGVTTLDVIRSETFVAALKDKDPGQVRVPVIGGHSGVTILPLLSQVEGVSFTDEEVAALTKRIQNAGTEVVEAKAGGGSATLSMGQAACRFGLALVKALQGESDVVEYAYVEGEGEYAPFFAQPIKLGKNGVEALLDIGKLSAYEQAALDGMLDTLKGDIQIGVEFVK</sequence>
<evidence type="ECO:0000250" key="1"/>
<evidence type="ECO:0000305" key="2"/>
<accession>Q9KUT3</accession>
<accession>Q8GN36</accession>
<accession>Q8GN37</accession>
<accession>Q8GN38</accession>
<accession>Q8GN39</accession>
<accession>Q99PZ5</accession>
<accession>Q99Q77</accession>
<accession>Q99QN5</accession>
<accession>Q9AG49</accession>
<accession>Q9AG50</accession>
<accession>Q9AIU2</accession>
<accession>Q9R3N1</accession>
<accession>Q9R3N2</accession>
<accession>Q9R3N3</accession>
<accession>Q9S4R7</accession>
<accession>Q9XCZ8</accession>
<protein>
    <recommendedName>
        <fullName>Malate dehydrogenase</fullName>
        <ecNumber>1.1.1.37</ecNumber>
    </recommendedName>
</protein>
<comment type="function">
    <text evidence="1">Catalyzes the reversible oxidation of malate to oxaloacetate.</text>
</comment>
<comment type="catalytic activity">
    <reaction>
        <text>(S)-malate + NAD(+) = oxaloacetate + NADH + H(+)</text>
        <dbReference type="Rhea" id="RHEA:21432"/>
        <dbReference type="ChEBI" id="CHEBI:15378"/>
        <dbReference type="ChEBI" id="CHEBI:15589"/>
        <dbReference type="ChEBI" id="CHEBI:16452"/>
        <dbReference type="ChEBI" id="CHEBI:57540"/>
        <dbReference type="ChEBI" id="CHEBI:57945"/>
        <dbReference type="EC" id="1.1.1.37"/>
    </reaction>
</comment>
<comment type="subunit">
    <text evidence="1">Homodimer.</text>
</comment>
<comment type="similarity">
    <text evidence="2">Belongs to the LDH/MDH superfamily. MDH type 1 family.</text>
</comment>
<comment type="sequence caution" evidence="2">
    <conflict type="erroneous initiation">
        <sequence resource="EMBL-CDS" id="AAF93605"/>
    </conflict>
</comment>
<keyword id="KW-0520">NAD</keyword>
<keyword id="KW-0560">Oxidoreductase</keyword>
<keyword id="KW-1185">Reference proteome</keyword>
<keyword id="KW-0816">Tricarboxylic acid cycle</keyword>
<name>MDH_VIBCH</name>
<organism>
    <name type="scientific">Vibrio cholerae serotype O1 (strain ATCC 39315 / El Tor Inaba N16961)</name>
    <dbReference type="NCBI Taxonomy" id="243277"/>
    <lineage>
        <taxon>Bacteria</taxon>
        <taxon>Pseudomonadati</taxon>
        <taxon>Pseudomonadota</taxon>
        <taxon>Gammaproteobacteria</taxon>
        <taxon>Vibrionales</taxon>
        <taxon>Vibrionaceae</taxon>
        <taxon>Vibrio</taxon>
    </lineage>
</organism>